<proteinExistence type="evidence at transcript level"/>
<reference key="1">
    <citation type="submission" date="1999-06" db="EMBL/GenBank/DDBJ databases">
        <title>Structural analysis of Arabidopsis thaliana chromosome 5. XI.</title>
        <authorList>
            <person name="Kaneko T."/>
            <person name="Katoh T."/>
            <person name="Asamizu E."/>
            <person name="Sato S."/>
            <person name="Nakamura Y."/>
            <person name="Kotani H."/>
            <person name="Tabata S."/>
        </authorList>
    </citation>
    <scope>NUCLEOTIDE SEQUENCE [LARGE SCALE GENOMIC DNA]</scope>
    <source>
        <strain>cv. Columbia</strain>
    </source>
</reference>
<reference key="2">
    <citation type="journal article" date="2017" name="Plant J.">
        <title>Araport11: a complete reannotation of the Arabidopsis thaliana reference genome.</title>
        <authorList>
            <person name="Cheng C.Y."/>
            <person name="Krishnakumar V."/>
            <person name="Chan A.P."/>
            <person name="Thibaud-Nissen F."/>
            <person name="Schobel S."/>
            <person name="Town C.D."/>
        </authorList>
    </citation>
    <scope>GENOME REANNOTATION</scope>
    <source>
        <strain>cv. Columbia</strain>
    </source>
</reference>
<reference key="3">
    <citation type="journal article" date="2003" name="Science">
        <title>Empirical analysis of transcriptional activity in the Arabidopsis genome.</title>
        <authorList>
            <person name="Yamada K."/>
            <person name="Lim J."/>
            <person name="Dale J.M."/>
            <person name="Chen H."/>
            <person name="Shinn P."/>
            <person name="Palm C.J."/>
            <person name="Southwick A.M."/>
            <person name="Wu H.C."/>
            <person name="Kim C.J."/>
            <person name="Nguyen M."/>
            <person name="Pham P.K."/>
            <person name="Cheuk R.F."/>
            <person name="Karlin-Newmann G."/>
            <person name="Liu S.X."/>
            <person name="Lam B."/>
            <person name="Sakano H."/>
            <person name="Wu T."/>
            <person name="Yu G."/>
            <person name="Miranda M."/>
            <person name="Quach H.L."/>
            <person name="Tripp M."/>
            <person name="Chang C.H."/>
            <person name="Lee J.M."/>
            <person name="Toriumi M.J."/>
            <person name="Chan M.M."/>
            <person name="Tang C.C."/>
            <person name="Onodera C.S."/>
            <person name="Deng J.M."/>
            <person name="Akiyama K."/>
            <person name="Ansari Y."/>
            <person name="Arakawa T."/>
            <person name="Banh J."/>
            <person name="Banno F."/>
            <person name="Bowser L."/>
            <person name="Brooks S.Y."/>
            <person name="Carninci P."/>
            <person name="Chao Q."/>
            <person name="Choy N."/>
            <person name="Enju A."/>
            <person name="Goldsmith A.D."/>
            <person name="Gurjal M."/>
            <person name="Hansen N.F."/>
            <person name="Hayashizaki Y."/>
            <person name="Johnson-Hopson C."/>
            <person name="Hsuan V.W."/>
            <person name="Iida K."/>
            <person name="Karnes M."/>
            <person name="Khan S."/>
            <person name="Koesema E."/>
            <person name="Ishida J."/>
            <person name="Jiang P.X."/>
            <person name="Jones T."/>
            <person name="Kawai J."/>
            <person name="Kamiya A."/>
            <person name="Meyers C."/>
            <person name="Nakajima M."/>
            <person name="Narusaka M."/>
            <person name="Seki M."/>
            <person name="Sakurai T."/>
            <person name="Satou M."/>
            <person name="Tamse R."/>
            <person name="Vaysberg M."/>
            <person name="Wallender E.K."/>
            <person name="Wong C."/>
            <person name="Yamamura Y."/>
            <person name="Yuan S."/>
            <person name="Shinozaki K."/>
            <person name="Davis R.W."/>
            <person name="Theologis A."/>
            <person name="Ecker J.R."/>
        </authorList>
    </citation>
    <scope>NUCLEOTIDE SEQUENCE [LARGE SCALE MRNA]</scope>
    <source>
        <strain>cv. Columbia</strain>
    </source>
</reference>
<reference key="4">
    <citation type="journal article" date="2002" name="J. Biol. Chem.">
        <title>Functional cloning and characterization of a plant efflux carrier for multidrug and heavy metal detoxification.</title>
        <authorList>
            <person name="Li L."/>
            <person name="He Z."/>
            <person name="Pandey G.K."/>
            <person name="Tsuchiya T."/>
            <person name="Luan S."/>
        </authorList>
    </citation>
    <scope>GENE FAMILY</scope>
    <scope>NOMENCLATURE</scope>
</reference>
<reference key="5">
    <citation type="journal article" date="2003" name="Eur. J. Biochem.">
        <title>The multidrug/oligosaccharidyl-lipid/polysaccharide (MOP) exporter superfamily.</title>
        <authorList>
            <person name="Hvorup R.N."/>
            <person name="Winnen B."/>
            <person name="Chang A.B."/>
            <person name="Jiang Y."/>
            <person name="Zhou X.F."/>
            <person name="Saier M.H. Jr."/>
        </authorList>
    </citation>
    <scope>GENE FAMILY</scope>
</reference>
<organism>
    <name type="scientific">Arabidopsis thaliana</name>
    <name type="common">Mouse-ear cress</name>
    <dbReference type="NCBI Taxonomy" id="3702"/>
    <lineage>
        <taxon>Eukaryota</taxon>
        <taxon>Viridiplantae</taxon>
        <taxon>Streptophyta</taxon>
        <taxon>Embryophyta</taxon>
        <taxon>Tracheophyta</taxon>
        <taxon>Spermatophyta</taxon>
        <taxon>Magnoliopsida</taxon>
        <taxon>eudicotyledons</taxon>
        <taxon>Gunneridae</taxon>
        <taxon>Pentapetalae</taxon>
        <taxon>rosids</taxon>
        <taxon>malvids</taxon>
        <taxon>Brassicales</taxon>
        <taxon>Brassicaceae</taxon>
        <taxon>Camelineae</taxon>
        <taxon>Arabidopsis</taxon>
    </lineage>
</organism>
<feature type="chain" id="PRO_0000434071" description="Protein DETOXIFICATION 30">
    <location>
        <begin position="1"/>
        <end position="498"/>
    </location>
</feature>
<feature type="transmembrane region" description="Helical" evidence="1">
    <location>
        <begin position="64"/>
        <end position="86"/>
    </location>
</feature>
<feature type="transmembrane region" description="Helical" evidence="1">
    <location>
        <begin position="91"/>
        <end position="111"/>
    </location>
</feature>
<feature type="transmembrane region" description="Helical" evidence="1">
    <location>
        <begin position="136"/>
        <end position="156"/>
    </location>
</feature>
<feature type="transmembrane region" description="Helical" evidence="1">
    <location>
        <begin position="161"/>
        <end position="181"/>
    </location>
</feature>
<feature type="transmembrane region" description="Helical" evidence="1">
    <location>
        <begin position="197"/>
        <end position="217"/>
    </location>
</feature>
<feature type="transmembrane region" description="Helical" evidence="1">
    <location>
        <begin position="227"/>
        <end position="247"/>
    </location>
</feature>
<feature type="transmembrane region" description="Helical" evidence="1">
    <location>
        <begin position="277"/>
        <end position="297"/>
    </location>
</feature>
<feature type="transmembrane region" description="Helical" evidence="1">
    <location>
        <begin position="302"/>
        <end position="322"/>
    </location>
</feature>
<feature type="transmembrane region" description="Helical" evidence="1">
    <location>
        <begin position="349"/>
        <end position="369"/>
    </location>
</feature>
<feature type="transmembrane region" description="Helical" evidence="1">
    <location>
        <begin position="393"/>
        <end position="413"/>
    </location>
</feature>
<feature type="transmembrane region" description="Helical" evidence="1">
    <location>
        <begin position="419"/>
        <end position="439"/>
    </location>
</feature>
<feature type="transmembrane region" description="Helical" evidence="1">
    <location>
        <begin position="447"/>
        <end position="467"/>
    </location>
</feature>
<keyword id="KW-0472">Membrane</keyword>
<keyword id="KW-1185">Reference proteome</keyword>
<keyword id="KW-0812">Transmembrane</keyword>
<keyword id="KW-1133">Transmembrane helix</keyword>
<keyword id="KW-0813">Transport</keyword>
<comment type="subcellular location">
    <subcellularLocation>
        <location evidence="1">Membrane</location>
        <topology evidence="1">Multi-pass membrane protein</topology>
    </subcellularLocation>
</comment>
<comment type="similarity">
    <text evidence="3">Belongs to the multi antimicrobial extrusion (MATE) (TC 2.A.66.1) family.</text>
</comment>
<accession>Q9LS19</accession>
<protein>
    <recommendedName>
        <fullName evidence="2">Protein DETOXIFICATION 30</fullName>
        <shortName evidence="2">AtDTX30</shortName>
    </recommendedName>
    <alternativeName>
        <fullName evidence="3">Multidrug and toxic compound extrusion protein 30</fullName>
        <shortName evidence="3">MATE protein 30</shortName>
    </alternativeName>
</protein>
<evidence type="ECO:0000255" key="1"/>
<evidence type="ECO:0000303" key="2">
    <source>
    </source>
</evidence>
<evidence type="ECO:0000305" key="3"/>
<evidence type="ECO:0000312" key="4">
    <source>
        <dbReference type="Araport" id="AT5G38030"/>
    </source>
</evidence>
<evidence type="ECO:0000312" key="5">
    <source>
        <dbReference type="EMBL" id="BAA97535.1"/>
    </source>
</evidence>
<gene>
    <name evidence="2" type="primary">DTX30</name>
    <name evidence="4" type="ordered locus">At5g38030</name>
    <name evidence="5" type="ORF">F16F17.3</name>
</gene>
<name>DTX30_ARATH</name>
<dbReference type="EMBL" id="AB028606">
    <property type="protein sequence ID" value="BAA97535.1"/>
    <property type="molecule type" value="Genomic_DNA"/>
</dbReference>
<dbReference type="EMBL" id="CP002688">
    <property type="protein sequence ID" value="AED94259.1"/>
    <property type="molecule type" value="Genomic_DNA"/>
</dbReference>
<dbReference type="EMBL" id="AF372972">
    <property type="protein sequence ID" value="AAK50109.1"/>
    <property type="molecule type" value="mRNA"/>
</dbReference>
<dbReference type="EMBL" id="BT002707">
    <property type="protein sequence ID" value="AAO11623.1"/>
    <property type="molecule type" value="mRNA"/>
</dbReference>
<dbReference type="RefSeq" id="NP_198619.1">
    <property type="nucleotide sequence ID" value="NM_123162.4"/>
</dbReference>
<dbReference type="SMR" id="Q9LS19"/>
<dbReference type="IntAct" id="Q9LS19">
    <property type="interactions" value="3"/>
</dbReference>
<dbReference type="STRING" id="3702.Q9LS19"/>
<dbReference type="PaxDb" id="3702-AT5G38030.1"/>
<dbReference type="ProteomicsDB" id="224298"/>
<dbReference type="EnsemblPlants" id="AT5G38030.1">
    <property type="protein sequence ID" value="AT5G38030.1"/>
    <property type="gene ID" value="AT5G38030"/>
</dbReference>
<dbReference type="GeneID" id="833782"/>
<dbReference type="Gramene" id="AT5G38030.1">
    <property type="protein sequence ID" value="AT5G38030.1"/>
    <property type="gene ID" value="AT5G38030"/>
</dbReference>
<dbReference type="KEGG" id="ath:AT5G38030"/>
<dbReference type="Araport" id="AT5G38030"/>
<dbReference type="TAIR" id="AT5G38030">
    <property type="gene designation" value="DTX30"/>
</dbReference>
<dbReference type="eggNOG" id="KOG1347">
    <property type="taxonomic scope" value="Eukaryota"/>
</dbReference>
<dbReference type="HOGENOM" id="CLU_012893_1_4_1"/>
<dbReference type="InParanoid" id="Q9LS19"/>
<dbReference type="OMA" id="LEVWYLM"/>
<dbReference type="PhylomeDB" id="Q9LS19"/>
<dbReference type="PRO" id="PR:Q9LS19"/>
<dbReference type="Proteomes" id="UP000006548">
    <property type="component" value="Chromosome 5"/>
</dbReference>
<dbReference type="ExpressionAtlas" id="Q9LS19">
    <property type="expression patterns" value="baseline and differential"/>
</dbReference>
<dbReference type="GO" id="GO:0005886">
    <property type="term" value="C:plasma membrane"/>
    <property type="evidence" value="ECO:0000314"/>
    <property type="project" value="TAIR"/>
</dbReference>
<dbReference type="GO" id="GO:0015297">
    <property type="term" value="F:antiporter activity"/>
    <property type="evidence" value="ECO:0007669"/>
    <property type="project" value="InterPro"/>
</dbReference>
<dbReference type="GO" id="GO:0042910">
    <property type="term" value="F:xenobiotic transmembrane transporter activity"/>
    <property type="evidence" value="ECO:0007669"/>
    <property type="project" value="InterPro"/>
</dbReference>
<dbReference type="GO" id="GO:0009624">
    <property type="term" value="P:response to nematode"/>
    <property type="evidence" value="ECO:0007007"/>
    <property type="project" value="TAIR"/>
</dbReference>
<dbReference type="GO" id="GO:1990961">
    <property type="term" value="P:xenobiotic detoxification by transmembrane export across the plasma membrane"/>
    <property type="evidence" value="ECO:0007669"/>
    <property type="project" value="InterPro"/>
</dbReference>
<dbReference type="CDD" id="cd13132">
    <property type="entry name" value="MATE_eukaryotic"/>
    <property type="match status" value="1"/>
</dbReference>
<dbReference type="InterPro" id="IPR045069">
    <property type="entry name" value="MATE_euk"/>
</dbReference>
<dbReference type="InterPro" id="IPR002528">
    <property type="entry name" value="MATE_fam"/>
</dbReference>
<dbReference type="NCBIfam" id="TIGR00797">
    <property type="entry name" value="matE"/>
    <property type="match status" value="1"/>
</dbReference>
<dbReference type="PANTHER" id="PTHR11206">
    <property type="entry name" value="MULTIDRUG RESISTANCE PROTEIN"/>
    <property type="match status" value="1"/>
</dbReference>
<dbReference type="Pfam" id="PF01554">
    <property type="entry name" value="MatE"/>
    <property type="match status" value="2"/>
</dbReference>
<sequence>MEEDKILTETLLSAAEEPPALPFSSVEDIPPITTVGGFVKEFNVEVKKLWYLAGPAIFMSITQYSLGAATQVFAGHISTIALAAVSVENSVIAGFSFGVMLGMGSALETLCGQAFGAGKLSMLGVYLQRSWVILNVTAVILSLLYIFAAPILAFIGQTPAISSATGIFSIYMIPQIFAYAVNYPTAKFLQSQSKIMVMAAISAVALVLHVLLTWFVIEGLQWGTAGLAVVLNASWWFIVVAQLVYIFSGTCGEAWSGFSWEAFHNLWSFVRLSLASAVMLCLEVWYLMAVILFAGYLKNAEISVAALSICMNILGWTAMIAIGMNAAVSVRVSNELGAKHPRTAKFSLLVAVITSTVIGLAISIALLIFRDKYPSLFVGDEEVIIVVKDLTPILAVSIVINNVQPVLSGVAVGAGWQAVVAYVNIVCYYVFGIPFGLLLGYKLNFGVMGIWCGMLTGTVVQTIVLTWMICRTNWDTEAAMAEGRIREWGGEVSDQLLN</sequence>